<name>RL16_FRAAA</name>
<protein>
    <recommendedName>
        <fullName evidence="1">Large ribosomal subunit protein uL16</fullName>
    </recommendedName>
    <alternativeName>
        <fullName evidence="3">50S ribosomal protein L16</fullName>
    </alternativeName>
</protein>
<comment type="function">
    <text evidence="1">Binds 23S rRNA and is also seen to make contacts with the A and possibly P site tRNAs.</text>
</comment>
<comment type="subunit">
    <text evidence="1">Part of the 50S ribosomal subunit.</text>
</comment>
<comment type="similarity">
    <text evidence="1">Belongs to the universal ribosomal protein uL16 family.</text>
</comment>
<keyword id="KW-1185">Reference proteome</keyword>
<keyword id="KW-0687">Ribonucleoprotein</keyword>
<keyword id="KW-0689">Ribosomal protein</keyword>
<keyword id="KW-0694">RNA-binding</keyword>
<keyword id="KW-0699">rRNA-binding</keyword>
<keyword id="KW-0820">tRNA-binding</keyword>
<reference key="1">
    <citation type="journal article" date="2007" name="Genome Res.">
        <title>Genome characteristics of facultatively symbiotic Frankia sp. strains reflect host range and host plant biogeography.</title>
        <authorList>
            <person name="Normand P."/>
            <person name="Lapierre P."/>
            <person name="Tisa L.S."/>
            <person name="Gogarten J.P."/>
            <person name="Alloisio N."/>
            <person name="Bagnarol E."/>
            <person name="Bassi C.A."/>
            <person name="Berry A.M."/>
            <person name="Bickhart D.M."/>
            <person name="Choisne N."/>
            <person name="Couloux A."/>
            <person name="Cournoyer B."/>
            <person name="Cruveiller S."/>
            <person name="Daubin V."/>
            <person name="Demange N."/>
            <person name="Francino M.P."/>
            <person name="Goltsman E."/>
            <person name="Huang Y."/>
            <person name="Kopp O.R."/>
            <person name="Labarre L."/>
            <person name="Lapidus A."/>
            <person name="Lavire C."/>
            <person name="Marechal J."/>
            <person name="Martinez M."/>
            <person name="Mastronunzio J.E."/>
            <person name="Mullin B.C."/>
            <person name="Niemann J."/>
            <person name="Pujic P."/>
            <person name="Rawnsley T."/>
            <person name="Rouy Z."/>
            <person name="Schenowitz C."/>
            <person name="Sellstedt A."/>
            <person name="Tavares F."/>
            <person name="Tomkins J.P."/>
            <person name="Vallenet D."/>
            <person name="Valverde C."/>
            <person name="Wall L.G."/>
            <person name="Wang Y."/>
            <person name="Medigue C."/>
            <person name="Benson D.R."/>
        </authorList>
    </citation>
    <scope>NUCLEOTIDE SEQUENCE [LARGE SCALE GENOMIC DNA]</scope>
    <source>
        <strain>DSM 45986 / CECT 9034 / ACN14a</strain>
    </source>
</reference>
<feature type="chain" id="PRO_1000054620" description="Large ribosomal subunit protein uL16">
    <location>
        <begin position="1"/>
        <end position="138"/>
    </location>
</feature>
<feature type="region of interest" description="Disordered" evidence="2">
    <location>
        <begin position="1"/>
        <end position="24"/>
    </location>
</feature>
<feature type="compositionally biased region" description="Basic residues" evidence="2">
    <location>
        <begin position="1"/>
        <end position="16"/>
    </location>
</feature>
<accession>Q0RRR4</accession>
<dbReference type="EMBL" id="CT573213">
    <property type="protein sequence ID" value="CAJ59753.1"/>
    <property type="molecule type" value="Genomic_DNA"/>
</dbReference>
<dbReference type="RefSeq" id="WP_009740521.1">
    <property type="nucleotide sequence ID" value="NC_008278.1"/>
</dbReference>
<dbReference type="SMR" id="Q0RRR4"/>
<dbReference type="STRING" id="326424.FRAAL1088"/>
<dbReference type="KEGG" id="fal:FRAAL1088"/>
<dbReference type="eggNOG" id="COG0197">
    <property type="taxonomic scope" value="Bacteria"/>
</dbReference>
<dbReference type="HOGENOM" id="CLU_078858_2_1_11"/>
<dbReference type="OrthoDB" id="9802589at2"/>
<dbReference type="Proteomes" id="UP000000657">
    <property type="component" value="Chromosome"/>
</dbReference>
<dbReference type="GO" id="GO:0022625">
    <property type="term" value="C:cytosolic large ribosomal subunit"/>
    <property type="evidence" value="ECO:0007669"/>
    <property type="project" value="TreeGrafter"/>
</dbReference>
<dbReference type="GO" id="GO:0019843">
    <property type="term" value="F:rRNA binding"/>
    <property type="evidence" value="ECO:0007669"/>
    <property type="project" value="UniProtKB-UniRule"/>
</dbReference>
<dbReference type="GO" id="GO:0003735">
    <property type="term" value="F:structural constituent of ribosome"/>
    <property type="evidence" value="ECO:0007669"/>
    <property type="project" value="InterPro"/>
</dbReference>
<dbReference type="GO" id="GO:0000049">
    <property type="term" value="F:tRNA binding"/>
    <property type="evidence" value="ECO:0007669"/>
    <property type="project" value="UniProtKB-KW"/>
</dbReference>
<dbReference type="GO" id="GO:0006412">
    <property type="term" value="P:translation"/>
    <property type="evidence" value="ECO:0007669"/>
    <property type="project" value="UniProtKB-UniRule"/>
</dbReference>
<dbReference type="CDD" id="cd01433">
    <property type="entry name" value="Ribosomal_L16_L10e"/>
    <property type="match status" value="1"/>
</dbReference>
<dbReference type="FunFam" id="3.90.1170.10:FF:000001">
    <property type="entry name" value="50S ribosomal protein L16"/>
    <property type="match status" value="1"/>
</dbReference>
<dbReference type="Gene3D" id="3.90.1170.10">
    <property type="entry name" value="Ribosomal protein L10e/L16"/>
    <property type="match status" value="1"/>
</dbReference>
<dbReference type="HAMAP" id="MF_01342">
    <property type="entry name" value="Ribosomal_uL16"/>
    <property type="match status" value="1"/>
</dbReference>
<dbReference type="InterPro" id="IPR047873">
    <property type="entry name" value="Ribosomal_uL16"/>
</dbReference>
<dbReference type="InterPro" id="IPR000114">
    <property type="entry name" value="Ribosomal_uL16_bact-type"/>
</dbReference>
<dbReference type="InterPro" id="IPR020798">
    <property type="entry name" value="Ribosomal_uL16_CS"/>
</dbReference>
<dbReference type="InterPro" id="IPR016180">
    <property type="entry name" value="Ribosomal_uL16_dom"/>
</dbReference>
<dbReference type="InterPro" id="IPR036920">
    <property type="entry name" value="Ribosomal_uL16_sf"/>
</dbReference>
<dbReference type="NCBIfam" id="TIGR01164">
    <property type="entry name" value="rplP_bact"/>
    <property type="match status" value="1"/>
</dbReference>
<dbReference type="PANTHER" id="PTHR12220">
    <property type="entry name" value="50S/60S RIBOSOMAL PROTEIN L16"/>
    <property type="match status" value="1"/>
</dbReference>
<dbReference type="PANTHER" id="PTHR12220:SF13">
    <property type="entry name" value="LARGE RIBOSOMAL SUBUNIT PROTEIN UL16M"/>
    <property type="match status" value="1"/>
</dbReference>
<dbReference type="Pfam" id="PF00252">
    <property type="entry name" value="Ribosomal_L16"/>
    <property type="match status" value="1"/>
</dbReference>
<dbReference type="PRINTS" id="PR00060">
    <property type="entry name" value="RIBOSOMALL16"/>
</dbReference>
<dbReference type="SUPFAM" id="SSF54686">
    <property type="entry name" value="Ribosomal protein L16p/L10e"/>
    <property type="match status" value="1"/>
</dbReference>
<dbReference type="PROSITE" id="PS00586">
    <property type="entry name" value="RIBOSOMAL_L16_1"/>
    <property type="match status" value="1"/>
</dbReference>
<dbReference type="PROSITE" id="PS00701">
    <property type="entry name" value="RIBOSOMAL_L16_2"/>
    <property type="match status" value="1"/>
</dbReference>
<sequence length="138" mass="15436">MLIPRKVAHRKQHHPGRTGAAKGGTRVTFGEYGIQALESAYVTNRQIESARIAMTRHIRRGGKVWINIYPDRPLTKKPAETRMGSGKGSPEWWVANVKPGRVLFELSGVAEPVAREAMRRAIHKLPMKCRFVVREGGA</sequence>
<gene>
    <name evidence="1" type="primary">rplP</name>
    <name type="ordered locus">FRAAL1088</name>
</gene>
<organism>
    <name type="scientific">Frankia alni (strain DSM 45986 / CECT 9034 / ACN14a)</name>
    <dbReference type="NCBI Taxonomy" id="326424"/>
    <lineage>
        <taxon>Bacteria</taxon>
        <taxon>Bacillati</taxon>
        <taxon>Actinomycetota</taxon>
        <taxon>Actinomycetes</taxon>
        <taxon>Frankiales</taxon>
        <taxon>Frankiaceae</taxon>
        <taxon>Frankia</taxon>
    </lineage>
</organism>
<proteinExistence type="inferred from homology"/>
<evidence type="ECO:0000255" key="1">
    <source>
        <dbReference type="HAMAP-Rule" id="MF_01342"/>
    </source>
</evidence>
<evidence type="ECO:0000256" key="2">
    <source>
        <dbReference type="SAM" id="MobiDB-lite"/>
    </source>
</evidence>
<evidence type="ECO:0000305" key="3"/>